<dbReference type="EC" id="3.6.1.9" evidence="1"/>
<dbReference type="EMBL" id="CP000356">
    <property type="protein sequence ID" value="ABF54546.1"/>
    <property type="molecule type" value="Genomic_DNA"/>
</dbReference>
<dbReference type="RefSeq" id="WP_011543110.1">
    <property type="nucleotide sequence ID" value="NC_008048.1"/>
</dbReference>
<dbReference type="SMR" id="Q1GP76"/>
<dbReference type="STRING" id="317655.Sala_2841"/>
<dbReference type="KEGG" id="sal:Sala_2841"/>
<dbReference type="eggNOG" id="COG0424">
    <property type="taxonomic scope" value="Bacteria"/>
</dbReference>
<dbReference type="HOGENOM" id="CLU_040416_1_1_5"/>
<dbReference type="OrthoDB" id="9813962at2"/>
<dbReference type="Proteomes" id="UP000006578">
    <property type="component" value="Chromosome"/>
</dbReference>
<dbReference type="GO" id="GO:0005737">
    <property type="term" value="C:cytoplasm"/>
    <property type="evidence" value="ECO:0007669"/>
    <property type="project" value="UniProtKB-SubCell"/>
</dbReference>
<dbReference type="GO" id="GO:0047429">
    <property type="term" value="F:nucleoside triphosphate diphosphatase activity"/>
    <property type="evidence" value="ECO:0007669"/>
    <property type="project" value="UniProtKB-EC"/>
</dbReference>
<dbReference type="GO" id="GO:0009117">
    <property type="term" value="P:nucleotide metabolic process"/>
    <property type="evidence" value="ECO:0007669"/>
    <property type="project" value="UniProtKB-KW"/>
</dbReference>
<dbReference type="CDD" id="cd00555">
    <property type="entry name" value="Maf"/>
    <property type="match status" value="1"/>
</dbReference>
<dbReference type="Gene3D" id="3.90.950.10">
    <property type="match status" value="1"/>
</dbReference>
<dbReference type="HAMAP" id="MF_00528">
    <property type="entry name" value="Maf"/>
    <property type="match status" value="1"/>
</dbReference>
<dbReference type="InterPro" id="IPR029001">
    <property type="entry name" value="ITPase-like_fam"/>
</dbReference>
<dbReference type="InterPro" id="IPR003697">
    <property type="entry name" value="Maf-like"/>
</dbReference>
<dbReference type="PANTHER" id="PTHR43213">
    <property type="entry name" value="BIFUNCTIONAL DTTP/UTP PYROPHOSPHATASE/METHYLTRANSFERASE PROTEIN-RELATED"/>
    <property type="match status" value="1"/>
</dbReference>
<dbReference type="PANTHER" id="PTHR43213:SF5">
    <property type="entry name" value="BIFUNCTIONAL DTTP_UTP PYROPHOSPHATASE_METHYLTRANSFERASE PROTEIN-RELATED"/>
    <property type="match status" value="1"/>
</dbReference>
<dbReference type="Pfam" id="PF02545">
    <property type="entry name" value="Maf"/>
    <property type="match status" value="1"/>
</dbReference>
<dbReference type="PIRSF" id="PIRSF006305">
    <property type="entry name" value="Maf"/>
    <property type="match status" value="1"/>
</dbReference>
<dbReference type="SUPFAM" id="SSF52972">
    <property type="entry name" value="ITPase-like"/>
    <property type="match status" value="1"/>
</dbReference>
<accession>Q1GP76</accession>
<gene>
    <name type="ordered locus">Sala_2841</name>
</gene>
<reference key="1">
    <citation type="journal article" date="2009" name="Proc. Natl. Acad. Sci. U.S.A.">
        <title>The genomic basis of trophic strategy in marine bacteria.</title>
        <authorList>
            <person name="Lauro F.M."/>
            <person name="McDougald D."/>
            <person name="Thomas T."/>
            <person name="Williams T.J."/>
            <person name="Egan S."/>
            <person name="Rice S."/>
            <person name="DeMaere M.Z."/>
            <person name="Ting L."/>
            <person name="Ertan H."/>
            <person name="Johnson J."/>
            <person name="Ferriera S."/>
            <person name="Lapidus A."/>
            <person name="Anderson I."/>
            <person name="Kyrpides N."/>
            <person name="Munk A.C."/>
            <person name="Detter C."/>
            <person name="Han C.S."/>
            <person name="Brown M.V."/>
            <person name="Robb F.T."/>
            <person name="Kjelleberg S."/>
            <person name="Cavicchioli R."/>
        </authorList>
    </citation>
    <scope>NUCLEOTIDE SEQUENCE [LARGE SCALE GENOMIC DNA]</scope>
    <source>
        <strain>DSM 13593 / LMG 18877 / RB2256</strain>
    </source>
</reference>
<organism>
    <name type="scientific">Sphingopyxis alaskensis (strain DSM 13593 / LMG 18877 / RB2256)</name>
    <name type="common">Sphingomonas alaskensis</name>
    <dbReference type="NCBI Taxonomy" id="317655"/>
    <lineage>
        <taxon>Bacteria</taxon>
        <taxon>Pseudomonadati</taxon>
        <taxon>Pseudomonadota</taxon>
        <taxon>Alphaproteobacteria</taxon>
        <taxon>Sphingomonadales</taxon>
        <taxon>Sphingomonadaceae</taxon>
        <taxon>Sphingopyxis</taxon>
    </lineage>
</organism>
<feature type="chain" id="PRO_0000267442" description="Nucleoside triphosphate pyrophosphatase">
    <location>
        <begin position="1"/>
        <end position="198"/>
    </location>
</feature>
<feature type="active site" description="Proton acceptor" evidence="1">
    <location>
        <position position="74"/>
    </location>
</feature>
<name>NTPP_SPHAL</name>
<sequence>MTLILASQSSGRAAMLRAAGLAFETTAAHVDEEMLTASLRAAGQTPRNIADALAEAKAVKIASRLPGVTVIGADSTLALDDGSMLAKPETPEEAADHLRRMAGRRHRLFSAAVAARDGAPIWRAIGEAKLWIRPLSDAFIADYVAQNWDSIRWTVGCYEIEGAGVQLFDRVEGDPWTIIGMPMLPLLTWLRATGLAPQ</sequence>
<proteinExistence type="inferred from homology"/>
<protein>
    <recommendedName>
        <fullName evidence="1">Nucleoside triphosphate pyrophosphatase</fullName>
        <ecNumber evidence="1">3.6.1.9</ecNumber>
    </recommendedName>
    <alternativeName>
        <fullName evidence="1">Nucleotide pyrophosphatase</fullName>
        <shortName evidence="1">Nucleotide PPase</shortName>
    </alternativeName>
</protein>
<comment type="function">
    <text evidence="1">Nucleoside triphosphate pyrophosphatase. May have a dual role in cell division arrest and in preventing the incorporation of modified nucleotides into cellular nucleic acids.</text>
</comment>
<comment type="catalytic activity">
    <reaction evidence="1">
        <text>a ribonucleoside 5'-triphosphate + H2O = a ribonucleoside 5'-phosphate + diphosphate + H(+)</text>
        <dbReference type="Rhea" id="RHEA:23996"/>
        <dbReference type="ChEBI" id="CHEBI:15377"/>
        <dbReference type="ChEBI" id="CHEBI:15378"/>
        <dbReference type="ChEBI" id="CHEBI:33019"/>
        <dbReference type="ChEBI" id="CHEBI:58043"/>
        <dbReference type="ChEBI" id="CHEBI:61557"/>
        <dbReference type="EC" id="3.6.1.9"/>
    </reaction>
</comment>
<comment type="catalytic activity">
    <reaction evidence="1">
        <text>a 2'-deoxyribonucleoside 5'-triphosphate + H2O = a 2'-deoxyribonucleoside 5'-phosphate + diphosphate + H(+)</text>
        <dbReference type="Rhea" id="RHEA:44644"/>
        <dbReference type="ChEBI" id="CHEBI:15377"/>
        <dbReference type="ChEBI" id="CHEBI:15378"/>
        <dbReference type="ChEBI" id="CHEBI:33019"/>
        <dbReference type="ChEBI" id="CHEBI:61560"/>
        <dbReference type="ChEBI" id="CHEBI:65317"/>
        <dbReference type="EC" id="3.6.1.9"/>
    </reaction>
</comment>
<comment type="cofactor">
    <cofactor evidence="1">
        <name>a divalent metal cation</name>
        <dbReference type="ChEBI" id="CHEBI:60240"/>
    </cofactor>
</comment>
<comment type="subcellular location">
    <subcellularLocation>
        <location evidence="1">Cytoplasm</location>
    </subcellularLocation>
</comment>
<comment type="similarity">
    <text evidence="1">Belongs to the Maf family.</text>
</comment>
<keyword id="KW-0963">Cytoplasm</keyword>
<keyword id="KW-0378">Hydrolase</keyword>
<keyword id="KW-0546">Nucleotide metabolism</keyword>
<keyword id="KW-1185">Reference proteome</keyword>
<evidence type="ECO:0000255" key="1">
    <source>
        <dbReference type="HAMAP-Rule" id="MF_00528"/>
    </source>
</evidence>